<organism>
    <name type="scientific">Shewanella sp. (strain W3-18-1)</name>
    <dbReference type="NCBI Taxonomy" id="351745"/>
    <lineage>
        <taxon>Bacteria</taxon>
        <taxon>Pseudomonadati</taxon>
        <taxon>Pseudomonadota</taxon>
        <taxon>Gammaproteobacteria</taxon>
        <taxon>Alteromonadales</taxon>
        <taxon>Shewanellaceae</taxon>
        <taxon>Shewanella</taxon>
    </lineage>
</organism>
<dbReference type="EC" id="6.5.1.2" evidence="1"/>
<dbReference type="EMBL" id="CP000503">
    <property type="protein sequence ID" value="ABM24482.1"/>
    <property type="molecule type" value="Genomic_DNA"/>
</dbReference>
<dbReference type="RefSeq" id="WP_011788981.1">
    <property type="nucleotide sequence ID" value="NC_008750.1"/>
</dbReference>
<dbReference type="SMR" id="A1RII7"/>
<dbReference type="KEGG" id="shw:Sputw3181_1645"/>
<dbReference type="HOGENOM" id="CLU_007764_2_1_6"/>
<dbReference type="Proteomes" id="UP000002597">
    <property type="component" value="Chromosome"/>
</dbReference>
<dbReference type="GO" id="GO:0005829">
    <property type="term" value="C:cytosol"/>
    <property type="evidence" value="ECO:0007669"/>
    <property type="project" value="TreeGrafter"/>
</dbReference>
<dbReference type="GO" id="GO:0003677">
    <property type="term" value="F:DNA binding"/>
    <property type="evidence" value="ECO:0007669"/>
    <property type="project" value="InterPro"/>
</dbReference>
<dbReference type="GO" id="GO:0003911">
    <property type="term" value="F:DNA ligase (NAD+) activity"/>
    <property type="evidence" value="ECO:0007669"/>
    <property type="project" value="UniProtKB-UniRule"/>
</dbReference>
<dbReference type="GO" id="GO:0046872">
    <property type="term" value="F:metal ion binding"/>
    <property type="evidence" value="ECO:0007669"/>
    <property type="project" value="UniProtKB-KW"/>
</dbReference>
<dbReference type="GO" id="GO:0006281">
    <property type="term" value="P:DNA repair"/>
    <property type="evidence" value="ECO:0007669"/>
    <property type="project" value="UniProtKB-KW"/>
</dbReference>
<dbReference type="GO" id="GO:0006260">
    <property type="term" value="P:DNA replication"/>
    <property type="evidence" value="ECO:0007669"/>
    <property type="project" value="UniProtKB-KW"/>
</dbReference>
<dbReference type="CDD" id="cd17748">
    <property type="entry name" value="BRCT_DNA_ligase_like"/>
    <property type="match status" value="1"/>
</dbReference>
<dbReference type="CDD" id="cd00114">
    <property type="entry name" value="LIGANc"/>
    <property type="match status" value="1"/>
</dbReference>
<dbReference type="FunFam" id="1.10.150.20:FF:000006">
    <property type="entry name" value="DNA ligase"/>
    <property type="match status" value="1"/>
</dbReference>
<dbReference type="FunFam" id="1.10.150.20:FF:000007">
    <property type="entry name" value="DNA ligase"/>
    <property type="match status" value="1"/>
</dbReference>
<dbReference type="FunFam" id="1.10.287.610:FF:000002">
    <property type="entry name" value="DNA ligase"/>
    <property type="match status" value="1"/>
</dbReference>
<dbReference type="FunFam" id="2.40.50.140:FF:000012">
    <property type="entry name" value="DNA ligase"/>
    <property type="match status" value="1"/>
</dbReference>
<dbReference type="FunFam" id="3.30.470.30:FF:000001">
    <property type="entry name" value="DNA ligase"/>
    <property type="match status" value="1"/>
</dbReference>
<dbReference type="Gene3D" id="6.20.10.30">
    <property type="match status" value="1"/>
</dbReference>
<dbReference type="Gene3D" id="1.10.150.20">
    <property type="entry name" value="5' to 3' exonuclease, C-terminal subdomain"/>
    <property type="match status" value="2"/>
</dbReference>
<dbReference type="Gene3D" id="3.40.50.10190">
    <property type="entry name" value="BRCT domain"/>
    <property type="match status" value="1"/>
</dbReference>
<dbReference type="Gene3D" id="3.30.470.30">
    <property type="entry name" value="DNA ligase/mRNA capping enzyme"/>
    <property type="match status" value="1"/>
</dbReference>
<dbReference type="Gene3D" id="1.10.287.610">
    <property type="entry name" value="Helix hairpin bin"/>
    <property type="match status" value="1"/>
</dbReference>
<dbReference type="Gene3D" id="2.40.50.140">
    <property type="entry name" value="Nucleic acid-binding proteins"/>
    <property type="match status" value="1"/>
</dbReference>
<dbReference type="HAMAP" id="MF_01588">
    <property type="entry name" value="DNA_ligase_A"/>
    <property type="match status" value="1"/>
</dbReference>
<dbReference type="InterPro" id="IPR001357">
    <property type="entry name" value="BRCT_dom"/>
</dbReference>
<dbReference type="InterPro" id="IPR036420">
    <property type="entry name" value="BRCT_dom_sf"/>
</dbReference>
<dbReference type="InterPro" id="IPR041663">
    <property type="entry name" value="DisA/LigA_HHH"/>
</dbReference>
<dbReference type="InterPro" id="IPR001679">
    <property type="entry name" value="DNA_ligase"/>
</dbReference>
<dbReference type="InterPro" id="IPR018239">
    <property type="entry name" value="DNA_ligase_AS"/>
</dbReference>
<dbReference type="InterPro" id="IPR033136">
    <property type="entry name" value="DNA_ligase_CS"/>
</dbReference>
<dbReference type="InterPro" id="IPR013839">
    <property type="entry name" value="DNAligase_adenylation"/>
</dbReference>
<dbReference type="InterPro" id="IPR013840">
    <property type="entry name" value="DNAligase_N"/>
</dbReference>
<dbReference type="InterPro" id="IPR003583">
    <property type="entry name" value="Hlx-hairpin-Hlx_DNA-bd_motif"/>
</dbReference>
<dbReference type="InterPro" id="IPR012340">
    <property type="entry name" value="NA-bd_OB-fold"/>
</dbReference>
<dbReference type="InterPro" id="IPR004150">
    <property type="entry name" value="NAD_DNA_ligase_OB"/>
</dbReference>
<dbReference type="InterPro" id="IPR010994">
    <property type="entry name" value="RuvA_2-like"/>
</dbReference>
<dbReference type="InterPro" id="IPR004149">
    <property type="entry name" value="Znf_DNAligase_C4"/>
</dbReference>
<dbReference type="NCBIfam" id="TIGR00575">
    <property type="entry name" value="dnlj"/>
    <property type="match status" value="1"/>
</dbReference>
<dbReference type="NCBIfam" id="NF005932">
    <property type="entry name" value="PRK07956.1"/>
    <property type="match status" value="1"/>
</dbReference>
<dbReference type="PANTHER" id="PTHR23389">
    <property type="entry name" value="CHROMOSOME TRANSMISSION FIDELITY FACTOR 18"/>
    <property type="match status" value="1"/>
</dbReference>
<dbReference type="PANTHER" id="PTHR23389:SF9">
    <property type="entry name" value="DNA LIGASE"/>
    <property type="match status" value="1"/>
</dbReference>
<dbReference type="Pfam" id="PF00533">
    <property type="entry name" value="BRCT"/>
    <property type="match status" value="1"/>
</dbReference>
<dbReference type="Pfam" id="PF01653">
    <property type="entry name" value="DNA_ligase_aden"/>
    <property type="match status" value="1"/>
</dbReference>
<dbReference type="Pfam" id="PF03120">
    <property type="entry name" value="DNA_ligase_OB"/>
    <property type="match status" value="1"/>
</dbReference>
<dbReference type="Pfam" id="PF03119">
    <property type="entry name" value="DNA_ligase_ZBD"/>
    <property type="match status" value="1"/>
</dbReference>
<dbReference type="Pfam" id="PF12826">
    <property type="entry name" value="HHH_2"/>
    <property type="match status" value="1"/>
</dbReference>
<dbReference type="PIRSF" id="PIRSF001604">
    <property type="entry name" value="LigA"/>
    <property type="match status" value="1"/>
</dbReference>
<dbReference type="SMART" id="SM00292">
    <property type="entry name" value="BRCT"/>
    <property type="match status" value="1"/>
</dbReference>
<dbReference type="SMART" id="SM00278">
    <property type="entry name" value="HhH1"/>
    <property type="match status" value="3"/>
</dbReference>
<dbReference type="SMART" id="SM00532">
    <property type="entry name" value="LIGANc"/>
    <property type="match status" value="1"/>
</dbReference>
<dbReference type="SUPFAM" id="SSF52113">
    <property type="entry name" value="BRCT domain"/>
    <property type="match status" value="1"/>
</dbReference>
<dbReference type="SUPFAM" id="SSF56091">
    <property type="entry name" value="DNA ligase/mRNA capping enzyme, catalytic domain"/>
    <property type="match status" value="1"/>
</dbReference>
<dbReference type="SUPFAM" id="SSF50249">
    <property type="entry name" value="Nucleic acid-binding proteins"/>
    <property type="match status" value="1"/>
</dbReference>
<dbReference type="SUPFAM" id="SSF47781">
    <property type="entry name" value="RuvA domain 2-like"/>
    <property type="match status" value="1"/>
</dbReference>
<dbReference type="PROSITE" id="PS50172">
    <property type="entry name" value="BRCT"/>
    <property type="match status" value="1"/>
</dbReference>
<dbReference type="PROSITE" id="PS01055">
    <property type="entry name" value="DNA_LIGASE_N1"/>
    <property type="match status" value="1"/>
</dbReference>
<dbReference type="PROSITE" id="PS01056">
    <property type="entry name" value="DNA_LIGASE_N2"/>
    <property type="match status" value="1"/>
</dbReference>
<keyword id="KW-0227">DNA damage</keyword>
<keyword id="KW-0234">DNA repair</keyword>
<keyword id="KW-0235">DNA replication</keyword>
<keyword id="KW-0436">Ligase</keyword>
<keyword id="KW-0460">Magnesium</keyword>
<keyword id="KW-0464">Manganese</keyword>
<keyword id="KW-0479">Metal-binding</keyword>
<keyword id="KW-0520">NAD</keyword>
<keyword id="KW-0862">Zinc</keyword>
<gene>
    <name evidence="1" type="primary">ligA</name>
    <name type="ordered locus">Sputw3181_1645</name>
</gene>
<proteinExistence type="inferred from homology"/>
<reference key="1">
    <citation type="submission" date="2006-12" db="EMBL/GenBank/DDBJ databases">
        <title>Complete sequence of Shewanella sp. W3-18-1.</title>
        <authorList>
            <consortium name="US DOE Joint Genome Institute"/>
            <person name="Copeland A."/>
            <person name="Lucas S."/>
            <person name="Lapidus A."/>
            <person name="Barry K."/>
            <person name="Detter J.C."/>
            <person name="Glavina del Rio T."/>
            <person name="Hammon N."/>
            <person name="Israni S."/>
            <person name="Dalin E."/>
            <person name="Tice H."/>
            <person name="Pitluck S."/>
            <person name="Chain P."/>
            <person name="Malfatti S."/>
            <person name="Shin M."/>
            <person name="Vergez L."/>
            <person name="Schmutz J."/>
            <person name="Larimer F."/>
            <person name="Land M."/>
            <person name="Hauser L."/>
            <person name="Kyrpides N."/>
            <person name="Lykidis A."/>
            <person name="Tiedje J."/>
            <person name="Richardson P."/>
        </authorList>
    </citation>
    <scope>NUCLEOTIDE SEQUENCE [LARGE SCALE GENOMIC DNA]</scope>
    <source>
        <strain>W3-18-1</strain>
    </source>
</reference>
<name>DNLJ_SHESW</name>
<protein>
    <recommendedName>
        <fullName evidence="1">DNA ligase</fullName>
        <ecNumber evidence="1">6.5.1.2</ecNumber>
    </recommendedName>
    <alternativeName>
        <fullName evidence="1">Polydeoxyribonucleotide synthase [NAD(+)]</fullName>
    </alternativeName>
</protein>
<accession>A1RII7</accession>
<sequence length="685" mass="74637">MQDIQLDKLLSADMSPENAQQVMQALSQSLNEHNIRYYVDDAPTITDSEYDRLMQCLIKLEAQFPQFIVADSPTQRVGGLALAKFDQITHLKPMLSLDNAFGEADFSAFHKRVTDKVGEVSFCCEPKLDGLAVSILYRHGVLERAATRGDGTVGEDITENVKTIKSIPLKLRGNDFPEVVEVRGEAFMPKAAFEALNERARAKDEKLFVNPRNAAAGSLRQLDSKITASRSLAFYAYALGVVEPDSYSLGKTHYEQLQQLKSWGLPVSNEIKVCEELDQVFDYYKDILTRRSDLPFEIDGVVMKVNDIAQQQRLGFVAKSPRWAIAYKFPAQEEMTLLEGVDFQVGRTGAVTPVARLKPVFVGGVTVSNATLHNADEIERLGIKIGDTVIIRRAGDVIPQIVAIVPERRPETATDIVFPHNCPVCGSLVERLEGEAVARCSGGLFCEAQRKEAIKHFASRKALDIDGMGDKVVEQLIDKELVQSPADLFKLTASMMTMLDRMGMKSATNLAAAIEAAKTTTLARFLYALGIREVGEATAANLAAHFASLDALRVATVEQLTAVEDVGVVVAQHVAHFFAQPHNLEVIDALIAAGVHWPAIEAPSADAQPLKGQTWVLTGTLNQLNRNDAKAQLQTLGAKVAGSVSKNTDCLVAGEAAGSKLAKAQELGVKVIDEEALLALFAANR</sequence>
<comment type="function">
    <text evidence="1">DNA ligase that catalyzes the formation of phosphodiester linkages between 5'-phosphoryl and 3'-hydroxyl groups in double-stranded DNA using NAD as a coenzyme and as the energy source for the reaction. It is essential for DNA replication and repair of damaged DNA.</text>
</comment>
<comment type="catalytic activity">
    <reaction evidence="1">
        <text>NAD(+) + (deoxyribonucleotide)n-3'-hydroxyl + 5'-phospho-(deoxyribonucleotide)m = (deoxyribonucleotide)n+m + AMP + beta-nicotinamide D-nucleotide.</text>
        <dbReference type="EC" id="6.5.1.2"/>
    </reaction>
</comment>
<comment type="cofactor">
    <cofactor evidence="1">
        <name>Mg(2+)</name>
        <dbReference type="ChEBI" id="CHEBI:18420"/>
    </cofactor>
    <cofactor evidence="1">
        <name>Mn(2+)</name>
        <dbReference type="ChEBI" id="CHEBI:29035"/>
    </cofactor>
</comment>
<comment type="similarity">
    <text evidence="1">Belongs to the NAD-dependent DNA ligase family. LigA subfamily.</text>
</comment>
<evidence type="ECO:0000255" key="1">
    <source>
        <dbReference type="HAMAP-Rule" id="MF_01588"/>
    </source>
</evidence>
<feature type="chain" id="PRO_0000313433" description="DNA ligase">
    <location>
        <begin position="1"/>
        <end position="685"/>
    </location>
</feature>
<feature type="domain" description="BRCT" evidence="1">
    <location>
        <begin position="605"/>
        <end position="685"/>
    </location>
</feature>
<feature type="active site" description="N6-AMP-lysine intermediate" evidence="1">
    <location>
        <position position="127"/>
    </location>
</feature>
<feature type="binding site" evidence="1">
    <location>
        <begin position="47"/>
        <end position="51"/>
    </location>
    <ligand>
        <name>NAD(+)</name>
        <dbReference type="ChEBI" id="CHEBI:57540"/>
    </ligand>
</feature>
<feature type="binding site" evidence="1">
    <location>
        <begin position="96"/>
        <end position="97"/>
    </location>
    <ligand>
        <name>NAD(+)</name>
        <dbReference type="ChEBI" id="CHEBI:57540"/>
    </ligand>
</feature>
<feature type="binding site" evidence="1">
    <location>
        <position position="125"/>
    </location>
    <ligand>
        <name>NAD(+)</name>
        <dbReference type="ChEBI" id="CHEBI:57540"/>
    </ligand>
</feature>
<feature type="binding site" evidence="1">
    <location>
        <position position="148"/>
    </location>
    <ligand>
        <name>NAD(+)</name>
        <dbReference type="ChEBI" id="CHEBI:57540"/>
    </ligand>
</feature>
<feature type="binding site" evidence="1">
    <location>
        <position position="185"/>
    </location>
    <ligand>
        <name>NAD(+)</name>
        <dbReference type="ChEBI" id="CHEBI:57540"/>
    </ligand>
</feature>
<feature type="binding site" evidence="1">
    <location>
        <position position="304"/>
    </location>
    <ligand>
        <name>NAD(+)</name>
        <dbReference type="ChEBI" id="CHEBI:57540"/>
    </ligand>
</feature>
<feature type="binding site" evidence="1">
    <location>
        <position position="328"/>
    </location>
    <ligand>
        <name>NAD(+)</name>
        <dbReference type="ChEBI" id="CHEBI:57540"/>
    </ligand>
</feature>
<feature type="binding site" evidence="1">
    <location>
        <position position="422"/>
    </location>
    <ligand>
        <name>Zn(2+)</name>
        <dbReference type="ChEBI" id="CHEBI:29105"/>
    </ligand>
</feature>
<feature type="binding site" evidence="1">
    <location>
        <position position="425"/>
    </location>
    <ligand>
        <name>Zn(2+)</name>
        <dbReference type="ChEBI" id="CHEBI:29105"/>
    </ligand>
</feature>
<feature type="binding site" evidence="1">
    <location>
        <position position="440"/>
    </location>
    <ligand>
        <name>Zn(2+)</name>
        <dbReference type="ChEBI" id="CHEBI:29105"/>
    </ligand>
</feature>
<feature type="binding site" evidence="1">
    <location>
        <position position="446"/>
    </location>
    <ligand>
        <name>Zn(2+)</name>
        <dbReference type="ChEBI" id="CHEBI:29105"/>
    </ligand>
</feature>